<dbReference type="EMBL" id="CP000435">
    <property type="protein sequence ID" value="ABI45645.1"/>
    <property type="molecule type" value="Genomic_DNA"/>
</dbReference>
<dbReference type="RefSeq" id="WP_011618902.1">
    <property type="nucleotide sequence ID" value="NC_008319.1"/>
</dbReference>
<dbReference type="SMR" id="Q0IBJ2"/>
<dbReference type="STRING" id="64471.sync_0967"/>
<dbReference type="KEGG" id="syg:sync_0967"/>
<dbReference type="eggNOG" id="ENOG5033BE9">
    <property type="taxonomic scope" value="Bacteria"/>
</dbReference>
<dbReference type="HOGENOM" id="CLU_216962_0_0_3"/>
<dbReference type="OrthoDB" id="428448at2"/>
<dbReference type="Proteomes" id="UP000001961">
    <property type="component" value="Chromosome"/>
</dbReference>
<dbReference type="GO" id="GO:0009512">
    <property type="term" value="C:cytochrome b6f complex"/>
    <property type="evidence" value="ECO:0007669"/>
    <property type="project" value="InterPro"/>
</dbReference>
<dbReference type="GO" id="GO:0031676">
    <property type="term" value="C:plasma membrane-derived thylakoid membrane"/>
    <property type="evidence" value="ECO:0007669"/>
    <property type="project" value="UniProtKB-SubCell"/>
</dbReference>
<dbReference type="GO" id="GO:0045158">
    <property type="term" value="F:electron transporter, transferring electrons within cytochrome b6/f complex of photosystem II activity"/>
    <property type="evidence" value="ECO:0007669"/>
    <property type="project" value="UniProtKB-UniRule"/>
</dbReference>
<dbReference type="GO" id="GO:0017004">
    <property type="term" value="P:cytochrome complex assembly"/>
    <property type="evidence" value="ECO:0007669"/>
    <property type="project" value="UniProtKB-UniRule"/>
</dbReference>
<dbReference type="GO" id="GO:0015979">
    <property type="term" value="P:photosynthesis"/>
    <property type="evidence" value="ECO:0007669"/>
    <property type="project" value="UniProtKB-KW"/>
</dbReference>
<dbReference type="HAMAP" id="MF_00432">
    <property type="entry name" value="Cytb6_f_PetG"/>
    <property type="match status" value="1"/>
</dbReference>
<dbReference type="InterPro" id="IPR003683">
    <property type="entry name" value="Cyt_6/f_cplx_su5"/>
</dbReference>
<dbReference type="InterPro" id="IPR036099">
    <property type="entry name" value="Cyt_6/f_cplx_su5_sf"/>
</dbReference>
<dbReference type="NCBIfam" id="NF001907">
    <property type="entry name" value="PRK00665.1"/>
    <property type="match status" value="1"/>
</dbReference>
<dbReference type="Pfam" id="PF02529">
    <property type="entry name" value="PetG"/>
    <property type="match status" value="1"/>
</dbReference>
<dbReference type="PIRSF" id="PIRSF000034">
    <property type="entry name" value="Cyt_b6-f_V"/>
    <property type="match status" value="1"/>
</dbReference>
<dbReference type="SUPFAM" id="SSF103446">
    <property type="entry name" value="PetG subunit of the cytochrome b6f complex"/>
    <property type="match status" value="1"/>
</dbReference>
<gene>
    <name evidence="1" type="primary">petG</name>
    <name type="ordered locus">sync_0967</name>
</gene>
<organism>
    <name type="scientific">Synechococcus sp. (strain CC9311)</name>
    <dbReference type="NCBI Taxonomy" id="64471"/>
    <lineage>
        <taxon>Bacteria</taxon>
        <taxon>Bacillati</taxon>
        <taxon>Cyanobacteriota</taxon>
        <taxon>Cyanophyceae</taxon>
        <taxon>Synechococcales</taxon>
        <taxon>Synechococcaceae</taxon>
        <taxon>Synechococcus</taxon>
    </lineage>
</organism>
<comment type="function">
    <text evidence="1">Component of the cytochrome b6-f complex, which mediates electron transfer between photosystem II (PSII) and photosystem I (PSI), cyclic electron flow around PSI, and state transitions. PetG is required for either the stability or assembly of the cytochrome b6-f complex.</text>
</comment>
<comment type="subunit">
    <text evidence="1">The 4 large subunits of the cytochrome b6-f complex are cytochrome b6, subunit IV (17 kDa polypeptide, PetD), cytochrome f and the Rieske protein, while the 4 small subunits are PetG, PetL, PetM and PetN. The complex functions as a dimer.</text>
</comment>
<comment type="subcellular location">
    <subcellularLocation>
        <location evidence="1">Cellular thylakoid membrane</location>
        <topology evidence="1">Single-pass membrane protein</topology>
    </subcellularLocation>
</comment>
<comment type="similarity">
    <text evidence="1">Belongs to the PetG family.</text>
</comment>
<feature type="chain" id="PRO_1000050400" description="Cytochrome b6-f complex subunit 5">
    <location>
        <begin position="1"/>
        <end position="37"/>
    </location>
</feature>
<feature type="transmembrane region" description="Helical" evidence="1">
    <location>
        <begin position="5"/>
        <end position="25"/>
    </location>
</feature>
<name>PETG_SYNS3</name>
<accession>Q0IBJ2</accession>
<keyword id="KW-0249">Electron transport</keyword>
<keyword id="KW-0472">Membrane</keyword>
<keyword id="KW-0602">Photosynthesis</keyword>
<keyword id="KW-1185">Reference proteome</keyword>
<keyword id="KW-0793">Thylakoid</keyword>
<keyword id="KW-0812">Transmembrane</keyword>
<keyword id="KW-1133">Transmembrane helix</keyword>
<keyword id="KW-0813">Transport</keyword>
<proteinExistence type="inferred from homology"/>
<reference key="1">
    <citation type="journal article" date="2006" name="Proc. Natl. Acad. Sci. U.S.A.">
        <title>Genome sequence of Synechococcus CC9311: insights into adaptation to a coastal environment.</title>
        <authorList>
            <person name="Palenik B."/>
            <person name="Ren Q."/>
            <person name="Dupont C.L."/>
            <person name="Myers G.S."/>
            <person name="Heidelberg J.F."/>
            <person name="Badger J.H."/>
            <person name="Madupu R."/>
            <person name="Nelson W.C."/>
            <person name="Brinkac L.M."/>
            <person name="Dodson R.J."/>
            <person name="Durkin A.S."/>
            <person name="Daugherty S.C."/>
            <person name="Sullivan S.A."/>
            <person name="Khouri H."/>
            <person name="Mohamoud Y."/>
            <person name="Halpin R."/>
            <person name="Paulsen I.T."/>
        </authorList>
    </citation>
    <scope>NUCLEOTIDE SEQUENCE [LARGE SCALE GENOMIC DNA]</scope>
    <source>
        <strain>CC9311</strain>
    </source>
</reference>
<sequence>MIEPLLCGIVLGLIPITLMGLFVAAWNQYRRGSALEG</sequence>
<protein>
    <recommendedName>
        <fullName evidence="1">Cytochrome b6-f complex subunit 5</fullName>
    </recommendedName>
    <alternativeName>
        <fullName evidence="1">Cytochrome b6-f complex subunit PetG</fullName>
    </alternativeName>
    <alternativeName>
        <fullName evidence="1">Cytochrome b6-f complex subunit V</fullName>
    </alternativeName>
</protein>
<evidence type="ECO:0000255" key="1">
    <source>
        <dbReference type="HAMAP-Rule" id="MF_00432"/>
    </source>
</evidence>